<proteinExistence type="inferred from homology"/>
<reference key="1">
    <citation type="journal article" date="2002" name="J. Bacteriol.">
        <title>Whole-genome comparison of Mycobacterium tuberculosis clinical and laboratory strains.</title>
        <authorList>
            <person name="Fleischmann R.D."/>
            <person name="Alland D."/>
            <person name="Eisen J.A."/>
            <person name="Carpenter L."/>
            <person name="White O."/>
            <person name="Peterson J.D."/>
            <person name="DeBoy R.T."/>
            <person name="Dodson R.J."/>
            <person name="Gwinn M.L."/>
            <person name="Haft D.H."/>
            <person name="Hickey E.K."/>
            <person name="Kolonay J.F."/>
            <person name="Nelson W.C."/>
            <person name="Umayam L.A."/>
            <person name="Ermolaeva M.D."/>
            <person name="Salzberg S.L."/>
            <person name="Delcher A."/>
            <person name="Utterback T.R."/>
            <person name="Weidman J.F."/>
            <person name="Khouri H.M."/>
            <person name="Gill J."/>
            <person name="Mikula A."/>
            <person name="Bishai W."/>
            <person name="Jacobs W.R. Jr."/>
            <person name="Venter J.C."/>
            <person name="Fraser C.M."/>
        </authorList>
    </citation>
    <scope>NUCLEOTIDE SEQUENCE [LARGE SCALE GENOMIC DNA]</scope>
    <source>
        <strain>CDC 1551 / Oshkosh</strain>
    </source>
</reference>
<gene>
    <name evidence="2" type="primary">htm</name>
    <name type="ordered locus">MT0586</name>
</gene>
<keyword id="KW-0963">Cytoplasm</keyword>
<keyword id="KW-0489">Methyltransferase</keyword>
<keyword id="KW-1185">Reference proteome</keyword>
<keyword id="KW-0949">S-adenosyl-L-methionine</keyword>
<keyword id="KW-0808">Transferase</keyword>
<comment type="function">
    <text evidence="2">Involved in cellular response to chemical stress and may contribute to resistance toward antimicrobial natural compounds as well as drugs. Catalyzes the methylation and detoxification of the P.aeruginosa toxin 2-heptyl-1-hydroxy-4(1H)-quinolinone (HQNO) to 2-heptyl-1-methoxy-4(1H)-quinolinone (HMOQ).</text>
</comment>
<comment type="catalytic activity">
    <reaction evidence="2">
        <text>2-heptyl-1-hydroxy-4(1H)-quinolinone + S-adenosyl-L-methionine = 2-heptyl-1-methoxy-4(1H)-quinolinone + S-adenosyl-L-homocysteine + H(+)</text>
        <dbReference type="Rhea" id="RHEA:65924"/>
        <dbReference type="ChEBI" id="CHEBI:15378"/>
        <dbReference type="ChEBI" id="CHEBI:57856"/>
        <dbReference type="ChEBI" id="CHEBI:59789"/>
        <dbReference type="ChEBI" id="CHEBI:157768"/>
        <dbReference type="ChEBI" id="CHEBI:157769"/>
        <dbReference type="EC" id="2.1.1.374"/>
    </reaction>
    <physiologicalReaction direction="left-to-right" evidence="2">
        <dbReference type="Rhea" id="RHEA:65925"/>
    </physiologicalReaction>
</comment>
<comment type="subunit">
    <text evidence="2">Monomer.</text>
</comment>
<comment type="subcellular location">
    <subcellularLocation>
        <location evidence="1">Cytoplasm</location>
    </subcellularLocation>
</comment>
<comment type="similarity">
    <text evidence="3">Belongs to the methyltransferase superfamily.</text>
</comment>
<comment type="caution">
    <text evidence="3">It is uncertain whether Met-1 or Met-17 is the initiator.</text>
</comment>
<sequence length="241" mass="25945">MSTVLTYIRAVDIYEHMTESLDLEFESAYRGESVAFGEGVRPPWSIGEPQPELAALIVQGKFRGDVLDVGCGEAAISLALAERGHTTVGLDLSPAAVELARHEAAKRGLANASFEVADASSFTGYDGRFDTIVDSTLFHSMPVESREGYLQSIVRAAAPGASYFVLVFDRAAIPEGPINAVTEDELRAAVSKYWIIDEIKPARLYARFPAGFAGMPALLDIREEPNGLQSIGGWLLSAHLG</sequence>
<protein>
    <recommendedName>
        <fullName evidence="2">2-heptyl-1-hydroxyquinolin-4(1H)-one methyltransferase</fullName>
        <shortName evidence="2">HQNO methyltransferase</shortName>
        <shortName evidence="2">HQNO-MTase</shortName>
        <ecNumber evidence="2">2.1.1.374</ecNumber>
    </recommendedName>
    <alternativeName>
        <fullName evidence="2">Heterocyclic toxin methyltransferase</fullName>
    </alternativeName>
</protein>
<feature type="chain" id="PRO_0000427633" description="2-heptyl-1-hydroxyquinolin-4(1H)-one methyltransferase">
    <location>
        <begin position="1"/>
        <end position="241"/>
    </location>
</feature>
<evidence type="ECO:0000250" key="1">
    <source>
        <dbReference type="UniProtKB" id="A5TZU0"/>
    </source>
</evidence>
<evidence type="ECO:0000250" key="2">
    <source>
        <dbReference type="UniProtKB" id="P9WKL5"/>
    </source>
</evidence>
<evidence type="ECO:0000305" key="3"/>
<organism>
    <name type="scientific">Mycobacterium tuberculosis (strain CDC 1551 / Oshkosh)</name>
    <dbReference type="NCBI Taxonomy" id="83331"/>
    <lineage>
        <taxon>Bacteria</taxon>
        <taxon>Bacillati</taxon>
        <taxon>Actinomycetota</taxon>
        <taxon>Actinomycetes</taxon>
        <taxon>Mycobacteriales</taxon>
        <taxon>Mycobacteriaceae</taxon>
        <taxon>Mycobacterium</taxon>
        <taxon>Mycobacterium tuberculosis complex</taxon>
    </lineage>
</organism>
<dbReference type="EC" id="2.1.1.374" evidence="2"/>
<dbReference type="EMBL" id="AE000516">
    <property type="protein sequence ID" value="AAK44809.1"/>
    <property type="molecule type" value="Genomic_DNA"/>
</dbReference>
<dbReference type="PIR" id="C70549">
    <property type="entry name" value="C70549"/>
</dbReference>
<dbReference type="SMR" id="P9WKL4"/>
<dbReference type="KEGG" id="mtc:MT0586"/>
<dbReference type="PATRIC" id="fig|83331.31.peg.617"/>
<dbReference type="HOGENOM" id="CLU_056435_4_2_11"/>
<dbReference type="Proteomes" id="UP000001020">
    <property type="component" value="Chromosome"/>
</dbReference>
<dbReference type="GO" id="GO:0005737">
    <property type="term" value="C:cytoplasm"/>
    <property type="evidence" value="ECO:0007669"/>
    <property type="project" value="UniProtKB-SubCell"/>
</dbReference>
<dbReference type="GO" id="GO:0008168">
    <property type="term" value="F:methyltransferase activity"/>
    <property type="evidence" value="ECO:0007669"/>
    <property type="project" value="UniProtKB-KW"/>
</dbReference>
<dbReference type="GO" id="GO:0032259">
    <property type="term" value="P:methylation"/>
    <property type="evidence" value="ECO:0007669"/>
    <property type="project" value="UniProtKB-KW"/>
</dbReference>
<dbReference type="CDD" id="cd02440">
    <property type="entry name" value="AdoMet_MTases"/>
    <property type="match status" value="1"/>
</dbReference>
<dbReference type="FunFam" id="3.40.50.150:FF:000291">
    <property type="entry name" value="Benzoquinone methyltransferase"/>
    <property type="match status" value="1"/>
</dbReference>
<dbReference type="Gene3D" id="3.40.50.150">
    <property type="entry name" value="Vaccinia Virus protein VP39"/>
    <property type="match status" value="1"/>
</dbReference>
<dbReference type="InterPro" id="IPR041698">
    <property type="entry name" value="Methyltransf_25"/>
</dbReference>
<dbReference type="InterPro" id="IPR029063">
    <property type="entry name" value="SAM-dependent_MTases_sf"/>
</dbReference>
<dbReference type="PANTHER" id="PTHR43464">
    <property type="entry name" value="METHYLTRANSFERASE"/>
    <property type="match status" value="1"/>
</dbReference>
<dbReference type="PANTHER" id="PTHR43464:SF19">
    <property type="entry name" value="UBIQUINONE BIOSYNTHESIS O-METHYLTRANSFERASE, MITOCHONDRIAL"/>
    <property type="match status" value="1"/>
</dbReference>
<dbReference type="Pfam" id="PF13649">
    <property type="entry name" value="Methyltransf_25"/>
    <property type="match status" value="1"/>
</dbReference>
<dbReference type="SUPFAM" id="SSF53335">
    <property type="entry name" value="S-adenosyl-L-methionine-dependent methyltransferases"/>
    <property type="match status" value="1"/>
</dbReference>
<name>HTM_MYCTO</name>
<accession>P9WKL4</accession>
<accession>F2GMK5</accession>
<accession>L0T6V5</accession>
<accession>O06426</accession>
<accession>Q7D9M8</accession>